<organism>
    <name type="scientific">Bifidobacterium longum (strain NCC 2705)</name>
    <dbReference type="NCBI Taxonomy" id="206672"/>
    <lineage>
        <taxon>Bacteria</taxon>
        <taxon>Bacillati</taxon>
        <taxon>Actinomycetota</taxon>
        <taxon>Actinomycetes</taxon>
        <taxon>Bifidobacteriales</taxon>
        <taxon>Bifidobacteriaceae</taxon>
        <taxon>Bifidobacterium</taxon>
    </lineage>
</organism>
<proteinExistence type="inferred from homology"/>
<protein>
    <recommendedName>
        <fullName evidence="1">Probable potassium transport system protein Kup 2</fullName>
    </recommendedName>
</protein>
<sequence>MAIVALGVVYGDIGTSPLYTAQTFLAGQGGLGSVDREAVLGMLSLVFWSITLITTVKYVLIAMRIDNNGEGGIFALYSLIRKYGAWLAIPAMLGGAAFLADSVLTPAVSISSAVEGLQTLPPLEGLFDENPSLTLMITVVIIVILFSVQSRGTESIGKVFGSMVLVWFGFLAIVGVTNLSNDWSVFEALNPVYGIKFLFSPNNAAGIALMGTVFLSTTGAEALYSDMGHVGRGNIYFTWPFIKVALVLNYFGQGAWMLANSDNPQYTAMESLNPFFQMMSPNVRYLAVILSVSAGVIASQALITGAFTMVSEATRLNWMPHLQVRYPARTRGQLYIPVVNGVLCVSTLAVLAIFKDSEHISAAYGLALTITMITTTVLLGVYLWHSGKRVGAIVFTVLFLAIQAMFFIASMAKFLHGGWFTMLLTAAILFVMYTWNEGTKLERAQRRHMRPNDFLPALDKLHSDFRIPYFADNIVYLTSDSETKRLDTDIFFSIFADHPKRARAWWAVSVETTDEPFTREYSVEDFGTNYIYRVRFRLGFKVSQSIPAYIHQIMHDLSKTGELPKQKSIYPKVDADPDIGTIRYVLIHKALMPESKVSARGALSLQAKYAIRHMAGSPVKWFGLAPYNPLVEVQPLFVSTRRPPRLKRTDTAKTIPTPTPTRAVADPAAVPDPMDTTSGLGRLVQELDAAVSAEARKTAEAAAADAPAEQGDKGDKGKAENGKPAAKPQRSAKQKR</sequence>
<name>KUP2_BIFLO</name>
<keyword id="KW-1003">Cell membrane</keyword>
<keyword id="KW-0406">Ion transport</keyword>
<keyword id="KW-0472">Membrane</keyword>
<keyword id="KW-0630">Potassium</keyword>
<keyword id="KW-0633">Potassium transport</keyword>
<keyword id="KW-1185">Reference proteome</keyword>
<keyword id="KW-0769">Symport</keyword>
<keyword id="KW-0812">Transmembrane</keyword>
<keyword id="KW-1133">Transmembrane helix</keyword>
<keyword id="KW-0813">Transport</keyword>
<feature type="chain" id="PRO_0000208994" description="Probable potassium transport system protein Kup 2">
    <location>
        <begin position="1"/>
        <end position="736"/>
    </location>
</feature>
<feature type="transmembrane region" description="Helical" evidence="1">
    <location>
        <begin position="1"/>
        <end position="21"/>
    </location>
</feature>
<feature type="transmembrane region" description="Helical" evidence="1">
    <location>
        <begin position="42"/>
        <end position="62"/>
    </location>
</feature>
<feature type="transmembrane region" description="Helical" evidence="1">
    <location>
        <begin position="84"/>
        <end position="104"/>
    </location>
</feature>
<feature type="transmembrane region" description="Helical" evidence="1">
    <location>
        <begin position="126"/>
        <end position="146"/>
    </location>
</feature>
<feature type="transmembrane region" description="Helical" evidence="1">
    <location>
        <begin position="156"/>
        <end position="176"/>
    </location>
</feature>
<feature type="transmembrane region" description="Helical" evidence="1">
    <location>
        <begin position="204"/>
        <end position="224"/>
    </location>
</feature>
<feature type="transmembrane region" description="Helical" evidence="1">
    <location>
        <begin position="239"/>
        <end position="259"/>
    </location>
</feature>
<feature type="transmembrane region" description="Helical" evidence="1">
    <location>
        <begin position="287"/>
        <end position="307"/>
    </location>
</feature>
<feature type="transmembrane region" description="Helical" evidence="1">
    <location>
        <begin position="334"/>
        <end position="354"/>
    </location>
</feature>
<feature type="transmembrane region" description="Helical" evidence="1">
    <location>
        <begin position="364"/>
        <end position="384"/>
    </location>
</feature>
<feature type="transmembrane region" description="Helical" evidence="1">
    <location>
        <begin position="390"/>
        <end position="410"/>
    </location>
</feature>
<feature type="transmembrane region" description="Helical" evidence="1">
    <location>
        <begin position="414"/>
        <end position="434"/>
    </location>
</feature>
<feature type="region of interest" description="Disordered" evidence="2">
    <location>
        <begin position="649"/>
        <end position="678"/>
    </location>
</feature>
<feature type="region of interest" description="Disordered" evidence="2">
    <location>
        <begin position="693"/>
        <end position="736"/>
    </location>
</feature>
<feature type="compositionally biased region" description="Low complexity" evidence="2">
    <location>
        <begin position="660"/>
        <end position="677"/>
    </location>
</feature>
<feature type="compositionally biased region" description="Low complexity" evidence="2">
    <location>
        <begin position="700"/>
        <end position="709"/>
    </location>
</feature>
<feature type="compositionally biased region" description="Basic and acidic residues" evidence="2">
    <location>
        <begin position="710"/>
        <end position="721"/>
    </location>
</feature>
<accession>Q8G7Q3</accession>
<gene>
    <name evidence="1" type="primary">kup2</name>
    <name type="ordered locus">BL0194</name>
</gene>
<dbReference type="EMBL" id="AE014295">
    <property type="protein sequence ID" value="AAN24048.1"/>
    <property type="molecule type" value="Genomic_DNA"/>
</dbReference>
<dbReference type="RefSeq" id="NP_695412.1">
    <property type="nucleotide sequence ID" value="NC_004307.2"/>
</dbReference>
<dbReference type="EnsemblBacteria" id="AAN24048">
    <property type="protein sequence ID" value="AAN24048"/>
    <property type="gene ID" value="BL0194"/>
</dbReference>
<dbReference type="KEGG" id="blo:BL0194"/>
<dbReference type="PATRIC" id="fig|206672.9.peg.1495"/>
<dbReference type="HOGENOM" id="CLU_008142_4_1_11"/>
<dbReference type="OrthoDB" id="9805577at2"/>
<dbReference type="PhylomeDB" id="Q8G7Q3"/>
<dbReference type="Proteomes" id="UP000000439">
    <property type="component" value="Chromosome"/>
</dbReference>
<dbReference type="GO" id="GO:0005886">
    <property type="term" value="C:plasma membrane"/>
    <property type="evidence" value="ECO:0007669"/>
    <property type="project" value="UniProtKB-SubCell"/>
</dbReference>
<dbReference type="GO" id="GO:0015079">
    <property type="term" value="F:potassium ion transmembrane transporter activity"/>
    <property type="evidence" value="ECO:0007669"/>
    <property type="project" value="UniProtKB-UniRule"/>
</dbReference>
<dbReference type="GO" id="GO:0015293">
    <property type="term" value="F:symporter activity"/>
    <property type="evidence" value="ECO:0007669"/>
    <property type="project" value="UniProtKB-UniRule"/>
</dbReference>
<dbReference type="HAMAP" id="MF_01522">
    <property type="entry name" value="Kup"/>
    <property type="match status" value="1"/>
</dbReference>
<dbReference type="InterPro" id="IPR003855">
    <property type="entry name" value="K+_transporter"/>
</dbReference>
<dbReference type="InterPro" id="IPR053952">
    <property type="entry name" value="K_trans_C"/>
</dbReference>
<dbReference type="InterPro" id="IPR053951">
    <property type="entry name" value="K_trans_N"/>
</dbReference>
<dbReference type="InterPro" id="IPR023051">
    <property type="entry name" value="Kup"/>
</dbReference>
<dbReference type="PANTHER" id="PTHR30540:SF83">
    <property type="entry name" value="K+ POTASSIUM TRANSPORTER"/>
    <property type="match status" value="1"/>
</dbReference>
<dbReference type="PANTHER" id="PTHR30540">
    <property type="entry name" value="OSMOTIC STRESS POTASSIUM TRANSPORTER"/>
    <property type="match status" value="1"/>
</dbReference>
<dbReference type="Pfam" id="PF02705">
    <property type="entry name" value="K_trans"/>
    <property type="match status" value="1"/>
</dbReference>
<dbReference type="Pfam" id="PF22776">
    <property type="entry name" value="K_trans_C"/>
    <property type="match status" value="1"/>
</dbReference>
<reference key="1">
    <citation type="journal article" date="2002" name="Proc. Natl. Acad. Sci. U.S.A.">
        <title>The genome sequence of Bifidobacterium longum reflects its adaptation to the human gastrointestinal tract.</title>
        <authorList>
            <person name="Schell M.A."/>
            <person name="Karmirantzou M."/>
            <person name="Snel B."/>
            <person name="Vilanova D."/>
            <person name="Berger B."/>
            <person name="Pessi G."/>
            <person name="Zwahlen M.-C."/>
            <person name="Desiere F."/>
            <person name="Bork P."/>
            <person name="Delley M."/>
            <person name="Pridmore R.D."/>
            <person name="Arigoni F."/>
        </authorList>
    </citation>
    <scope>NUCLEOTIDE SEQUENCE [LARGE SCALE GENOMIC DNA]</scope>
    <source>
        <strain>NCC 2705</strain>
    </source>
</reference>
<evidence type="ECO:0000255" key="1">
    <source>
        <dbReference type="HAMAP-Rule" id="MF_01522"/>
    </source>
</evidence>
<evidence type="ECO:0000256" key="2">
    <source>
        <dbReference type="SAM" id="MobiDB-lite"/>
    </source>
</evidence>
<evidence type="ECO:0000305" key="3"/>
<comment type="function">
    <text evidence="1">Transport of potassium into the cell. Likely operates as a K(+):H(+) symporter.</text>
</comment>
<comment type="catalytic activity">
    <reaction evidence="1">
        <text>K(+)(in) + H(+)(in) = K(+)(out) + H(+)(out)</text>
        <dbReference type="Rhea" id="RHEA:28490"/>
        <dbReference type="ChEBI" id="CHEBI:15378"/>
        <dbReference type="ChEBI" id="CHEBI:29103"/>
    </reaction>
    <physiologicalReaction direction="right-to-left" evidence="1">
        <dbReference type="Rhea" id="RHEA:28492"/>
    </physiologicalReaction>
</comment>
<comment type="subcellular location">
    <subcellularLocation>
        <location evidence="1">Cell membrane</location>
        <topology evidence="1">Multi-pass membrane protein</topology>
    </subcellularLocation>
</comment>
<comment type="similarity">
    <text evidence="1 3">Belongs to the HAK/KUP transporter (TC 2.A.72) family.</text>
</comment>